<proteinExistence type="inferred from homology"/>
<sequence>MLDVNNFEYMKIGLASPDKIRSWSHGEVKKPETINYRTLKPERDGLFCERIFGPMKDWECSCGKYKRVRYKGVVCDRCGVEVTKSKVRRERMGHIELAAPVSHIWYFKGIPSRMGLVMDMSPRALEEIIYFASYVVTEPGDTPLEKKQLLSEREYRVYREKYGKGFSAGMGAEAIKKILADIDLEKETNDLKEELKSAQGQRRTRAIRRLEVMEAFRNSGNNPSWMVLDVLPVIPPEIRPMVQLEGGRFATSDLNDLYRRVINRNNRLKRLLDLGAPNIIVQNEKRMLQEAVDALIDNGRRGRPVTGPGNRPLKSLSHMLKGKQGRFRQNLLGKRVDYSGRSVIVVGPNLKMYQCGLPKEMALELFKPFVMKELVGRGLAHNIKSAKRKIERMAPEIWDVLEEVIREHPVLLNRAPTLHRLGIQAFEPTLVEGRAIRLHPLVCTAYNADFDGDQMAVHVPLSAEAQAEARILMLAAQNILNPKDGKPVVTPSQDMVLGNYYLTLEREKAVGEGTIFKDINEAQLAYQNGYVHLHSRIAVFAGSIPNERFTDEQRNQLLITTVGKLIFNTILPKSFPYINEPTKFNLEIETPAKYFVDTTTDVRAHIAAQELIDPFKKKILGNIIAEVFKKFHITETSKMLDRMKDLGFKISTKAGMTVGIADILTLEEKHEILEKAHDTVEKITKSFRRGLITDDERYERVIAVWNAAKDEIQGKLILSLDRLNPIFMMQDSGARGNISNFTQLAGMRGLMADPSGRIVELPITSNFREGLTVLEYFISTHGARKGLTDTALKTADSGYLTRRLVDVAQDVIIREDDCGTDRGLTIKAIREGTEIIEPLEERLEGRYSRKTIRHPETKEVIARENDLITEAIATQIVDAGIEEVTIRSAFTCNTKHGVCKKCYGKNLATGTEVEVGEAVGIIAAQSIGEPGTQLTMRTFHTGGVAGDDITQGLPRIQEIFEARNPKGQAIITEVGGEVVSIEEGRDRQQEITIQGTDDRRSYNIPYTARLRVEEGTIVERGEALTEGSVDPKALIRVRDVLSVQEYLLAEVQKVYRMQGVEIGDKHVEVMVRQMLRKIRVMDTGDTNILPGTLMDIHTFTEANREAILSGSQPATGRPVLLGITKASLETDSFLSAASFQETTRVLTDAAIKGKRDELLGLKENVILGKLVPAGTGIGRYRKLKSEVIKETAEVTDEITNI</sequence>
<feature type="chain" id="PRO_0000067757" description="DNA-directed RNA polymerase subunit beta'">
    <location>
        <begin position="1"/>
        <end position="1201"/>
    </location>
</feature>
<feature type="binding site" evidence="1">
    <location>
        <position position="60"/>
    </location>
    <ligand>
        <name>Zn(2+)</name>
        <dbReference type="ChEBI" id="CHEBI:29105"/>
        <label>1</label>
    </ligand>
</feature>
<feature type="binding site" evidence="1">
    <location>
        <position position="62"/>
    </location>
    <ligand>
        <name>Zn(2+)</name>
        <dbReference type="ChEBI" id="CHEBI:29105"/>
        <label>1</label>
    </ligand>
</feature>
<feature type="binding site" evidence="1">
    <location>
        <position position="75"/>
    </location>
    <ligand>
        <name>Zn(2+)</name>
        <dbReference type="ChEBI" id="CHEBI:29105"/>
        <label>1</label>
    </ligand>
</feature>
<feature type="binding site" evidence="1">
    <location>
        <position position="78"/>
    </location>
    <ligand>
        <name>Zn(2+)</name>
        <dbReference type="ChEBI" id="CHEBI:29105"/>
        <label>1</label>
    </ligand>
</feature>
<feature type="binding site" evidence="1">
    <location>
        <position position="449"/>
    </location>
    <ligand>
        <name>Mg(2+)</name>
        <dbReference type="ChEBI" id="CHEBI:18420"/>
    </ligand>
</feature>
<feature type="binding site" evidence="1">
    <location>
        <position position="451"/>
    </location>
    <ligand>
        <name>Mg(2+)</name>
        <dbReference type="ChEBI" id="CHEBI:18420"/>
    </ligand>
</feature>
<feature type="binding site" evidence="1">
    <location>
        <position position="453"/>
    </location>
    <ligand>
        <name>Mg(2+)</name>
        <dbReference type="ChEBI" id="CHEBI:18420"/>
    </ligand>
</feature>
<feature type="binding site" evidence="1">
    <location>
        <position position="818"/>
    </location>
    <ligand>
        <name>Zn(2+)</name>
        <dbReference type="ChEBI" id="CHEBI:29105"/>
        <label>2</label>
    </ligand>
</feature>
<feature type="binding site" evidence="1">
    <location>
        <position position="892"/>
    </location>
    <ligand>
        <name>Zn(2+)</name>
        <dbReference type="ChEBI" id="CHEBI:29105"/>
        <label>2</label>
    </ligand>
</feature>
<feature type="binding site" evidence="1">
    <location>
        <position position="899"/>
    </location>
    <ligand>
        <name>Zn(2+)</name>
        <dbReference type="ChEBI" id="CHEBI:29105"/>
        <label>2</label>
    </ligand>
</feature>
<feature type="binding site" evidence="1">
    <location>
        <position position="902"/>
    </location>
    <ligand>
        <name>Zn(2+)</name>
        <dbReference type="ChEBI" id="CHEBI:29105"/>
        <label>2</label>
    </ligand>
</feature>
<comment type="function">
    <text evidence="1">DNA-dependent RNA polymerase catalyzes the transcription of DNA into RNA using the four ribonucleoside triphosphates as substrates.</text>
</comment>
<comment type="catalytic activity">
    <reaction evidence="1">
        <text>RNA(n) + a ribonucleoside 5'-triphosphate = RNA(n+1) + diphosphate</text>
        <dbReference type="Rhea" id="RHEA:21248"/>
        <dbReference type="Rhea" id="RHEA-COMP:14527"/>
        <dbReference type="Rhea" id="RHEA-COMP:17342"/>
        <dbReference type="ChEBI" id="CHEBI:33019"/>
        <dbReference type="ChEBI" id="CHEBI:61557"/>
        <dbReference type="ChEBI" id="CHEBI:140395"/>
        <dbReference type="EC" id="2.7.7.6"/>
    </reaction>
</comment>
<comment type="cofactor">
    <cofactor evidence="1">
        <name>Mg(2+)</name>
        <dbReference type="ChEBI" id="CHEBI:18420"/>
    </cofactor>
    <text evidence="1">Binds 1 Mg(2+) ion per subunit.</text>
</comment>
<comment type="cofactor">
    <cofactor evidence="1">
        <name>Zn(2+)</name>
        <dbReference type="ChEBI" id="CHEBI:29105"/>
    </cofactor>
    <text evidence="1">Binds 2 Zn(2+) ions per subunit.</text>
</comment>
<comment type="subunit">
    <text evidence="1">The RNAP catalytic core consists of 2 alpha, 1 beta, 1 beta' and 1 omega subunit. When a sigma factor is associated with the core the holoenzyme is formed, which can initiate transcription.</text>
</comment>
<comment type="similarity">
    <text evidence="1">Belongs to the RNA polymerase beta' chain family.</text>
</comment>
<accession>Q8YA96</accession>
<evidence type="ECO:0000255" key="1">
    <source>
        <dbReference type="HAMAP-Rule" id="MF_01322"/>
    </source>
</evidence>
<reference key="1">
    <citation type="journal article" date="2001" name="Science">
        <title>Comparative genomics of Listeria species.</title>
        <authorList>
            <person name="Glaser P."/>
            <person name="Frangeul L."/>
            <person name="Buchrieser C."/>
            <person name="Rusniok C."/>
            <person name="Amend A."/>
            <person name="Baquero F."/>
            <person name="Berche P."/>
            <person name="Bloecker H."/>
            <person name="Brandt P."/>
            <person name="Chakraborty T."/>
            <person name="Charbit A."/>
            <person name="Chetouani F."/>
            <person name="Couve E."/>
            <person name="de Daruvar A."/>
            <person name="Dehoux P."/>
            <person name="Domann E."/>
            <person name="Dominguez-Bernal G."/>
            <person name="Duchaud E."/>
            <person name="Durant L."/>
            <person name="Dussurget O."/>
            <person name="Entian K.-D."/>
            <person name="Fsihi H."/>
            <person name="Garcia-del Portillo F."/>
            <person name="Garrido P."/>
            <person name="Gautier L."/>
            <person name="Goebel W."/>
            <person name="Gomez-Lopez N."/>
            <person name="Hain T."/>
            <person name="Hauf J."/>
            <person name="Jackson D."/>
            <person name="Jones L.-M."/>
            <person name="Kaerst U."/>
            <person name="Kreft J."/>
            <person name="Kuhn M."/>
            <person name="Kunst F."/>
            <person name="Kurapkat G."/>
            <person name="Madueno E."/>
            <person name="Maitournam A."/>
            <person name="Mata Vicente J."/>
            <person name="Ng E."/>
            <person name="Nedjari H."/>
            <person name="Nordsiek G."/>
            <person name="Novella S."/>
            <person name="de Pablos B."/>
            <person name="Perez-Diaz J.-C."/>
            <person name="Purcell R."/>
            <person name="Remmel B."/>
            <person name="Rose M."/>
            <person name="Schlueter T."/>
            <person name="Simoes N."/>
            <person name="Tierrez A."/>
            <person name="Vazquez-Boland J.-A."/>
            <person name="Voss H."/>
            <person name="Wehland J."/>
            <person name="Cossart P."/>
        </authorList>
    </citation>
    <scope>NUCLEOTIDE SEQUENCE [LARGE SCALE GENOMIC DNA]</scope>
    <source>
        <strain>ATCC BAA-679 / EGD-e</strain>
    </source>
</reference>
<organism>
    <name type="scientific">Listeria monocytogenes serovar 1/2a (strain ATCC BAA-679 / EGD-e)</name>
    <dbReference type="NCBI Taxonomy" id="169963"/>
    <lineage>
        <taxon>Bacteria</taxon>
        <taxon>Bacillati</taxon>
        <taxon>Bacillota</taxon>
        <taxon>Bacilli</taxon>
        <taxon>Bacillales</taxon>
        <taxon>Listeriaceae</taxon>
        <taxon>Listeria</taxon>
    </lineage>
</organism>
<dbReference type="EC" id="2.7.7.6" evidence="1"/>
<dbReference type="EMBL" id="AL591974">
    <property type="protein sequence ID" value="CAD00786.1"/>
    <property type="molecule type" value="Genomic_DNA"/>
</dbReference>
<dbReference type="PIR" id="AD1107">
    <property type="entry name" value="AD1107"/>
</dbReference>
<dbReference type="RefSeq" id="NP_463790.1">
    <property type="nucleotide sequence ID" value="NC_003210.1"/>
</dbReference>
<dbReference type="RefSeq" id="WP_003732839.1">
    <property type="nucleotide sequence ID" value="NZ_CP149495.1"/>
</dbReference>
<dbReference type="SMR" id="Q8YA96"/>
<dbReference type="STRING" id="169963.gene:17592910"/>
<dbReference type="PaxDb" id="169963-lmo0259"/>
<dbReference type="EnsemblBacteria" id="CAD00786">
    <property type="protein sequence ID" value="CAD00786"/>
    <property type="gene ID" value="CAD00786"/>
</dbReference>
<dbReference type="GeneID" id="93238173"/>
<dbReference type="GeneID" id="987344"/>
<dbReference type="KEGG" id="lmo:lmo0259"/>
<dbReference type="PATRIC" id="fig|169963.11.peg.267"/>
<dbReference type="eggNOG" id="COG0086">
    <property type="taxonomic scope" value="Bacteria"/>
</dbReference>
<dbReference type="HOGENOM" id="CLU_000524_3_1_9"/>
<dbReference type="OrthoDB" id="9815296at2"/>
<dbReference type="PhylomeDB" id="Q8YA96"/>
<dbReference type="BioCyc" id="LMON169963:LMO0259-MONOMER"/>
<dbReference type="Proteomes" id="UP000000817">
    <property type="component" value="Chromosome"/>
</dbReference>
<dbReference type="GO" id="GO:0000428">
    <property type="term" value="C:DNA-directed RNA polymerase complex"/>
    <property type="evidence" value="ECO:0007669"/>
    <property type="project" value="UniProtKB-KW"/>
</dbReference>
<dbReference type="GO" id="GO:0003677">
    <property type="term" value="F:DNA binding"/>
    <property type="evidence" value="ECO:0007669"/>
    <property type="project" value="UniProtKB-UniRule"/>
</dbReference>
<dbReference type="GO" id="GO:0003899">
    <property type="term" value="F:DNA-directed RNA polymerase activity"/>
    <property type="evidence" value="ECO:0007669"/>
    <property type="project" value="UniProtKB-UniRule"/>
</dbReference>
<dbReference type="GO" id="GO:0000287">
    <property type="term" value="F:magnesium ion binding"/>
    <property type="evidence" value="ECO:0007669"/>
    <property type="project" value="UniProtKB-UniRule"/>
</dbReference>
<dbReference type="GO" id="GO:0008270">
    <property type="term" value="F:zinc ion binding"/>
    <property type="evidence" value="ECO:0007669"/>
    <property type="project" value="UniProtKB-UniRule"/>
</dbReference>
<dbReference type="GO" id="GO:0006351">
    <property type="term" value="P:DNA-templated transcription"/>
    <property type="evidence" value="ECO:0007669"/>
    <property type="project" value="UniProtKB-UniRule"/>
</dbReference>
<dbReference type="CDD" id="cd02655">
    <property type="entry name" value="RNAP_beta'_C"/>
    <property type="match status" value="1"/>
</dbReference>
<dbReference type="CDD" id="cd01609">
    <property type="entry name" value="RNAP_beta'_N"/>
    <property type="match status" value="1"/>
</dbReference>
<dbReference type="FunFam" id="1.10.132.30:FF:000003">
    <property type="entry name" value="DNA-directed RNA polymerase subunit beta"/>
    <property type="match status" value="1"/>
</dbReference>
<dbReference type="FunFam" id="1.10.150.390:FF:000002">
    <property type="entry name" value="DNA-directed RNA polymerase subunit beta"/>
    <property type="match status" value="1"/>
</dbReference>
<dbReference type="FunFam" id="1.10.274.100:FF:000019">
    <property type="entry name" value="DNA-directed RNA polymerase subunit beta"/>
    <property type="match status" value="1"/>
</dbReference>
<dbReference type="FunFam" id="1.10.40.90:FF:000001">
    <property type="entry name" value="DNA-directed RNA polymerase subunit beta"/>
    <property type="match status" value="1"/>
</dbReference>
<dbReference type="FunFam" id="4.10.860.120:FF:000001">
    <property type="entry name" value="DNA-directed RNA polymerase subunit beta"/>
    <property type="match status" value="1"/>
</dbReference>
<dbReference type="Gene3D" id="1.10.132.30">
    <property type="match status" value="1"/>
</dbReference>
<dbReference type="Gene3D" id="1.10.150.390">
    <property type="match status" value="1"/>
</dbReference>
<dbReference type="Gene3D" id="1.10.1790.20">
    <property type="match status" value="1"/>
</dbReference>
<dbReference type="Gene3D" id="1.10.40.90">
    <property type="match status" value="1"/>
</dbReference>
<dbReference type="Gene3D" id="2.40.40.20">
    <property type="match status" value="1"/>
</dbReference>
<dbReference type="Gene3D" id="2.40.50.100">
    <property type="match status" value="1"/>
</dbReference>
<dbReference type="Gene3D" id="4.10.860.120">
    <property type="entry name" value="RNA polymerase II, clamp domain"/>
    <property type="match status" value="1"/>
</dbReference>
<dbReference type="Gene3D" id="1.10.274.100">
    <property type="entry name" value="RNA polymerase Rpb1, domain 3"/>
    <property type="match status" value="1"/>
</dbReference>
<dbReference type="HAMAP" id="MF_01322">
    <property type="entry name" value="RNApol_bact_RpoC"/>
    <property type="match status" value="1"/>
</dbReference>
<dbReference type="InterPro" id="IPR045867">
    <property type="entry name" value="DNA-dir_RpoC_beta_prime"/>
</dbReference>
<dbReference type="InterPro" id="IPR012754">
    <property type="entry name" value="DNA-dir_RpoC_beta_prime_bact"/>
</dbReference>
<dbReference type="InterPro" id="IPR000722">
    <property type="entry name" value="RNA_pol_asu"/>
</dbReference>
<dbReference type="InterPro" id="IPR006592">
    <property type="entry name" value="RNA_pol_N"/>
</dbReference>
<dbReference type="InterPro" id="IPR007080">
    <property type="entry name" value="RNA_pol_Rpb1_1"/>
</dbReference>
<dbReference type="InterPro" id="IPR007066">
    <property type="entry name" value="RNA_pol_Rpb1_3"/>
</dbReference>
<dbReference type="InterPro" id="IPR042102">
    <property type="entry name" value="RNA_pol_Rpb1_3_sf"/>
</dbReference>
<dbReference type="InterPro" id="IPR007083">
    <property type="entry name" value="RNA_pol_Rpb1_4"/>
</dbReference>
<dbReference type="InterPro" id="IPR007081">
    <property type="entry name" value="RNA_pol_Rpb1_5"/>
</dbReference>
<dbReference type="InterPro" id="IPR044893">
    <property type="entry name" value="RNA_pol_Rpb1_clamp_domain"/>
</dbReference>
<dbReference type="InterPro" id="IPR038120">
    <property type="entry name" value="Rpb1_funnel_sf"/>
</dbReference>
<dbReference type="NCBIfam" id="TIGR02386">
    <property type="entry name" value="rpoC_TIGR"/>
    <property type="match status" value="1"/>
</dbReference>
<dbReference type="PANTHER" id="PTHR19376">
    <property type="entry name" value="DNA-DIRECTED RNA POLYMERASE"/>
    <property type="match status" value="1"/>
</dbReference>
<dbReference type="PANTHER" id="PTHR19376:SF54">
    <property type="entry name" value="DNA-DIRECTED RNA POLYMERASE SUBUNIT BETA"/>
    <property type="match status" value="1"/>
</dbReference>
<dbReference type="Pfam" id="PF04997">
    <property type="entry name" value="RNA_pol_Rpb1_1"/>
    <property type="match status" value="1"/>
</dbReference>
<dbReference type="Pfam" id="PF00623">
    <property type="entry name" value="RNA_pol_Rpb1_2"/>
    <property type="match status" value="1"/>
</dbReference>
<dbReference type="Pfam" id="PF04983">
    <property type="entry name" value="RNA_pol_Rpb1_3"/>
    <property type="match status" value="1"/>
</dbReference>
<dbReference type="Pfam" id="PF05000">
    <property type="entry name" value="RNA_pol_Rpb1_4"/>
    <property type="match status" value="1"/>
</dbReference>
<dbReference type="Pfam" id="PF04998">
    <property type="entry name" value="RNA_pol_Rpb1_5"/>
    <property type="match status" value="1"/>
</dbReference>
<dbReference type="SMART" id="SM00663">
    <property type="entry name" value="RPOLA_N"/>
    <property type="match status" value="1"/>
</dbReference>
<dbReference type="SUPFAM" id="SSF64484">
    <property type="entry name" value="beta and beta-prime subunits of DNA dependent RNA-polymerase"/>
    <property type="match status" value="1"/>
</dbReference>
<gene>
    <name evidence="1" type="primary">rpoC</name>
    <name type="ordered locus">lmo0259</name>
</gene>
<name>RPOC_LISMO</name>
<protein>
    <recommendedName>
        <fullName evidence="1">DNA-directed RNA polymerase subunit beta'</fullName>
        <shortName evidence="1">RNAP subunit beta'</shortName>
        <ecNumber evidence="1">2.7.7.6</ecNumber>
    </recommendedName>
    <alternativeName>
        <fullName evidence="1">RNA polymerase subunit beta'</fullName>
    </alternativeName>
    <alternativeName>
        <fullName evidence="1">Transcriptase subunit beta'</fullName>
    </alternativeName>
</protein>
<keyword id="KW-0240">DNA-directed RNA polymerase</keyword>
<keyword id="KW-0460">Magnesium</keyword>
<keyword id="KW-0479">Metal-binding</keyword>
<keyword id="KW-0548">Nucleotidyltransferase</keyword>
<keyword id="KW-1185">Reference proteome</keyword>
<keyword id="KW-0804">Transcription</keyword>
<keyword id="KW-0808">Transferase</keyword>
<keyword id="KW-0862">Zinc</keyword>